<dbReference type="EC" id="4.6.1.1"/>
<dbReference type="EMBL" id="D55650">
    <property type="protein sequence ID" value="BAA09511.1"/>
    <property type="molecule type" value="Genomic_DNA"/>
</dbReference>
<dbReference type="PIR" id="I39600">
    <property type="entry name" value="I39600"/>
</dbReference>
<dbReference type="SMR" id="P43524"/>
<dbReference type="GO" id="GO:0031676">
    <property type="term" value="C:plasma membrane-derived thylakoid membrane"/>
    <property type="evidence" value="ECO:0007669"/>
    <property type="project" value="UniProtKB-SubCell"/>
</dbReference>
<dbReference type="GO" id="GO:0004016">
    <property type="term" value="F:adenylate cyclase activity"/>
    <property type="evidence" value="ECO:0007669"/>
    <property type="project" value="UniProtKB-EC"/>
</dbReference>
<dbReference type="GO" id="GO:0005524">
    <property type="term" value="F:ATP binding"/>
    <property type="evidence" value="ECO:0007669"/>
    <property type="project" value="UniProtKB-KW"/>
</dbReference>
<dbReference type="GO" id="GO:0046872">
    <property type="term" value="F:metal ion binding"/>
    <property type="evidence" value="ECO:0007669"/>
    <property type="project" value="UniProtKB-KW"/>
</dbReference>
<dbReference type="GO" id="GO:0006171">
    <property type="term" value="P:cAMP biosynthetic process"/>
    <property type="evidence" value="ECO:0007669"/>
    <property type="project" value="UniProtKB-KW"/>
</dbReference>
<dbReference type="GO" id="GO:0035556">
    <property type="term" value="P:intracellular signal transduction"/>
    <property type="evidence" value="ECO:0007669"/>
    <property type="project" value="InterPro"/>
</dbReference>
<dbReference type="CDD" id="cd07302">
    <property type="entry name" value="CHD"/>
    <property type="match status" value="1"/>
</dbReference>
<dbReference type="CDD" id="cd06225">
    <property type="entry name" value="HAMP"/>
    <property type="match status" value="1"/>
</dbReference>
<dbReference type="Gene3D" id="6.10.340.10">
    <property type="match status" value="1"/>
</dbReference>
<dbReference type="Gene3D" id="3.30.70.1230">
    <property type="entry name" value="Nucleotide cyclase"/>
    <property type="match status" value="1"/>
</dbReference>
<dbReference type="InterPro" id="IPR001054">
    <property type="entry name" value="A/G_cyclase"/>
</dbReference>
<dbReference type="InterPro" id="IPR050697">
    <property type="entry name" value="Adenylyl/Guanylyl_Cyclase_3/4"/>
</dbReference>
<dbReference type="InterPro" id="IPR003660">
    <property type="entry name" value="HAMP_dom"/>
</dbReference>
<dbReference type="InterPro" id="IPR029787">
    <property type="entry name" value="Nucleotide_cyclase"/>
</dbReference>
<dbReference type="PANTHER" id="PTHR43081:SF1">
    <property type="entry name" value="ADENYLATE CYCLASE, TERMINAL-DIFFERENTIATION SPECIFIC"/>
    <property type="match status" value="1"/>
</dbReference>
<dbReference type="PANTHER" id="PTHR43081">
    <property type="entry name" value="ADENYLATE CYCLASE, TERMINAL-DIFFERENTIATION SPECIFIC-RELATED"/>
    <property type="match status" value="1"/>
</dbReference>
<dbReference type="Pfam" id="PF00211">
    <property type="entry name" value="Guanylate_cyc"/>
    <property type="match status" value="1"/>
</dbReference>
<dbReference type="Pfam" id="PF00672">
    <property type="entry name" value="HAMP"/>
    <property type="match status" value="1"/>
</dbReference>
<dbReference type="SMART" id="SM00044">
    <property type="entry name" value="CYCc"/>
    <property type="match status" value="1"/>
</dbReference>
<dbReference type="SMART" id="SM00304">
    <property type="entry name" value="HAMP"/>
    <property type="match status" value="1"/>
</dbReference>
<dbReference type="SUPFAM" id="SSF158472">
    <property type="entry name" value="HAMP domain-like"/>
    <property type="match status" value="1"/>
</dbReference>
<dbReference type="SUPFAM" id="SSF55073">
    <property type="entry name" value="Nucleotide cyclase"/>
    <property type="match status" value="1"/>
</dbReference>
<dbReference type="PROSITE" id="PS50125">
    <property type="entry name" value="GUANYLATE_CYCLASE_2"/>
    <property type="match status" value="1"/>
</dbReference>
<dbReference type="PROSITE" id="PS50885">
    <property type="entry name" value="HAMP"/>
    <property type="match status" value="1"/>
</dbReference>
<reference key="1">
    <citation type="journal article" date="1995" name="J. Bacteriol.">
        <title>Molecular cloning of the cyanobacterial adenylate cyclase gene from the filamentous cyanobacterium Anabaena cylindrica.</title>
        <authorList>
            <person name="Katayama M."/>
            <person name="Wada Y."/>
            <person name="Ohmori M."/>
        </authorList>
    </citation>
    <scope>NUCLEOTIDE SEQUENCE [GENOMIC DNA]</scope>
    <source>
        <strain>IAM M-1</strain>
    </source>
</reference>
<accession>P43524</accession>
<organism>
    <name type="scientific">Anabaena cylindrica</name>
    <dbReference type="NCBI Taxonomy" id="1165"/>
    <lineage>
        <taxon>Bacteria</taxon>
        <taxon>Bacillati</taxon>
        <taxon>Cyanobacteriota</taxon>
        <taxon>Cyanophyceae</taxon>
        <taxon>Nostocales</taxon>
        <taxon>Nostocaceae</taxon>
        <taxon>Anabaena</taxon>
    </lineage>
</organism>
<evidence type="ECO:0000250" key="1"/>
<evidence type="ECO:0000255" key="2"/>
<evidence type="ECO:0000255" key="3">
    <source>
        <dbReference type="PROSITE-ProRule" id="PRU00099"/>
    </source>
</evidence>
<evidence type="ECO:0000255" key="4">
    <source>
        <dbReference type="PROSITE-ProRule" id="PRU00102"/>
    </source>
</evidence>
<evidence type="ECO:0000305" key="5"/>
<name>CYAA_ANACY</name>
<feature type="chain" id="PRO_0000195742" description="Adenylate cyclase">
    <location>
        <begin position="1"/>
        <end position="502"/>
    </location>
</feature>
<feature type="topological domain" description="Cytoplasmic" evidence="2">
    <location>
        <begin position="1"/>
        <end position="25"/>
    </location>
</feature>
<feature type="transmembrane region" description="Helical" evidence="2">
    <location>
        <begin position="26"/>
        <end position="46"/>
    </location>
</feature>
<feature type="topological domain" description="Lumenal, thylakoid" evidence="2">
    <location>
        <begin position="47"/>
        <end position="203"/>
    </location>
</feature>
<feature type="transmembrane region" description="Helical" evidence="2">
    <location>
        <begin position="204"/>
        <end position="226"/>
    </location>
</feature>
<feature type="topological domain" description="Cytoplasmic" evidence="2">
    <location>
        <begin position="227"/>
        <end position="502"/>
    </location>
</feature>
<feature type="domain" description="HAMP" evidence="4">
    <location>
        <begin position="227"/>
        <end position="280"/>
    </location>
</feature>
<feature type="domain" description="Guanylate cyclase" evidence="3">
    <location>
        <begin position="320"/>
        <end position="451"/>
    </location>
</feature>
<feature type="binding site" evidence="1">
    <location>
        <position position="325"/>
    </location>
    <ligand>
        <name>Mg(2+)</name>
        <dbReference type="ChEBI" id="CHEBI:18420"/>
    </ligand>
</feature>
<feature type="binding site" evidence="1">
    <location>
        <position position="369"/>
    </location>
    <ligand>
        <name>Mg(2+)</name>
        <dbReference type="ChEBI" id="CHEBI:18420"/>
    </ligand>
</feature>
<proteinExistence type="inferred from homology"/>
<comment type="function">
    <text>May function as a membrane-localized receptor protein.</text>
</comment>
<comment type="catalytic activity">
    <reaction>
        <text>ATP = 3',5'-cyclic AMP + diphosphate</text>
        <dbReference type="Rhea" id="RHEA:15389"/>
        <dbReference type="ChEBI" id="CHEBI:30616"/>
        <dbReference type="ChEBI" id="CHEBI:33019"/>
        <dbReference type="ChEBI" id="CHEBI:58165"/>
        <dbReference type="EC" id="4.6.1.1"/>
    </reaction>
</comment>
<comment type="cofactor">
    <cofactor evidence="1">
        <name>Mg(2+)</name>
        <dbReference type="ChEBI" id="CHEBI:18420"/>
    </cofactor>
    <text evidence="1">Binds 1 Mg(2+) ion per subunit.</text>
</comment>
<comment type="subcellular location">
    <subcellularLocation>
        <location>Cellular thylakoid membrane</location>
        <topology>Multi-pass membrane protein</topology>
    </subcellularLocation>
</comment>
<comment type="domain">
    <text>The N-terminal half could sense signals such as pH or a change in membrane potential and regulates the catalytic activity of the C-terminal half.</text>
</comment>
<comment type="similarity">
    <text evidence="5">Belongs to the adenylyl cyclase class-3 family.</text>
</comment>
<keyword id="KW-0067">ATP-binding</keyword>
<keyword id="KW-0115">cAMP biosynthesis</keyword>
<keyword id="KW-0456">Lyase</keyword>
<keyword id="KW-0460">Magnesium</keyword>
<keyword id="KW-0472">Membrane</keyword>
<keyword id="KW-0479">Metal-binding</keyword>
<keyword id="KW-0547">Nucleotide-binding</keyword>
<keyword id="KW-0793">Thylakoid</keyword>
<keyword id="KW-0812">Transmembrane</keyword>
<keyword id="KW-1133">Transmembrane helix</keyword>
<protein>
    <recommendedName>
        <fullName>Adenylate cyclase</fullName>
        <ecNumber>4.6.1.1</ecNumber>
    </recommendedName>
    <alternativeName>
        <fullName>ATP pyrophosphate-lyase</fullName>
    </alternativeName>
    <alternativeName>
        <fullName>Adenylyl cyclase</fullName>
    </alternativeName>
</protein>
<sequence length="502" mass="55294">MGDFCRRVDCKAMKFFALRSSIRTQIMASTTLLILALIGAIVTVWAKSESTLYHQEKLNDAKILSKVLSSTYANEVSEENWSQIRLNIDLLLRENEDFLYALVSDSNQKNQIAASSPDEFQNNYIPDIVSLSVTNAAINSSEKTHVVETFILRDIYFADKLRAKRGEKVMEVSSDIQTLSGRKLGKLRIGISLRKVNLAVTNAVNQALVVGFAGLNIGWICAYFLAQHLSDPVRRLQISVAKIAGGDLQHRADIHSRADEIGALATSVNEMSAALQISFNKLKKTLDSFERFVPNKFISVIAPQGIENIEVGAASTRRMTILFCDIRGYTSMSEAMEPIEIFRFLNDYLACMGKAIDEAGGFIDKYIGDAIMALFDDGNTDCALHAAILMQQALDKFNDERSMQTGKTGLPRISVGIGIHRGTVVMGTVGFTSRIDSTVIGDAVNVASRIEGLTKQYGCNILITESVVRNLSCPESFSLRLIDKSVKVKGKDEAISIYEVKA</sequence>
<gene>
    <name type="primary">cya</name>
</gene>